<dbReference type="EC" id="1.11.1.24" evidence="2 3"/>
<dbReference type="EMBL" id="AL123456">
    <property type="protein sequence ID" value="CCP44699.1"/>
    <property type="molecule type" value="Genomic_DNA"/>
</dbReference>
<dbReference type="PIR" id="H70635">
    <property type="entry name" value="H70635"/>
</dbReference>
<dbReference type="RefSeq" id="NP_216448.1">
    <property type="nucleotide sequence ID" value="NC_000962.3"/>
</dbReference>
<dbReference type="RefSeq" id="WP_003409700.1">
    <property type="nucleotide sequence ID" value="NZ_NVQJ01000034.1"/>
</dbReference>
<dbReference type="PDB" id="1XVQ">
    <property type="method" value="X-ray"/>
    <property type="resolution" value="1.75 A"/>
    <property type="chains" value="A=1-165"/>
</dbReference>
<dbReference type="PDB" id="1Y25">
    <property type="method" value="X-ray"/>
    <property type="resolution" value="2.10 A"/>
    <property type="chains" value="A/B=3-165"/>
</dbReference>
<dbReference type="PDBsum" id="1XVQ"/>
<dbReference type="PDBsum" id="1Y25"/>
<dbReference type="SMR" id="P9WG35"/>
<dbReference type="FunCoup" id="P9WG35">
    <property type="interactions" value="1"/>
</dbReference>
<dbReference type="STRING" id="83332.Rv1932"/>
<dbReference type="DrugBank" id="DB03382">
    <property type="generic name" value="S-oxy-L-cysteine"/>
</dbReference>
<dbReference type="PaxDb" id="83332-Rv1932"/>
<dbReference type="DNASU" id="885357"/>
<dbReference type="GeneID" id="885357"/>
<dbReference type="KEGG" id="mtu:Rv1932"/>
<dbReference type="KEGG" id="mtv:RVBD_1932"/>
<dbReference type="TubercuList" id="Rv1932"/>
<dbReference type="eggNOG" id="COG2077">
    <property type="taxonomic scope" value="Bacteria"/>
</dbReference>
<dbReference type="InParanoid" id="P9WG35"/>
<dbReference type="OrthoDB" id="9781543at2"/>
<dbReference type="PhylomeDB" id="P9WG35"/>
<dbReference type="Reactome" id="R-HSA-1222538">
    <property type="pathway name" value="Tolerance by Mtb to nitric oxide produced by macrophages"/>
</dbReference>
<dbReference type="Reactome" id="R-HSA-1222541">
    <property type="pathway name" value="Cell redox homeostasis"/>
</dbReference>
<dbReference type="EvolutionaryTrace" id="P9WG35"/>
<dbReference type="Proteomes" id="UP000001584">
    <property type="component" value="Chromosome"/>
</dbReference>
<dbReference type="GO" id="GO:0005829">
    <property type="term" value="C:cytosol"/>
    <property type="evidence" value="ECO:0000304"/>
    <property type="project" value="Reactome"/>
</dbReference>
<dbReference type="GO" id="GO:0005576">
    <property type="term" value="C:extracellular region"/>
    <property type="evidence" value="ECO:0007005"/>
    <property type="project" value="MTBBASE"/>
</dbReference>
<dbReference type="GO" id="GO:0009274">
    <property type="term" value="C:peptidoglycan-based cell wall"/>
    <property type="evidence" value="ECO:0007005"/>
    <property type="project" value="UniProtKB"/>
</dbReference>
<dbReference type="GO" id="GO:0015036">
    <property type="term" value="F:disulfide oxidoreductase activity"/>
    <property type="evidence" value="ECO:0000314"/>
    <property type="project" value="MTBBASE"/>
</dbReference>
<dbReference type="GO" id="GO:0004601">
    <property type="term" value="F:peroxidase activity"/>
    <property type="evidence" value="ECO:0000314"/>
    <property type="project" value="MTBBASE"/>
</dbReference>
<dbReference type="GO" id="GO:0051920">
    <property type="term" value="F:peroxiredoxin activity"/>
    <property type="evidence" value="ECO:0000314"/>
    <property type="project" value="MTBBASE"/>
</dbReference>
<dbReference type="GO" id="GO:0008379">
    <property type="term" value="F:thioredoxin peroxidase activity"/>
    <property type="evidence" value="ECO:0007669"/>
    <property type="project" value="UniProtKB-UniRule"/>
</dbReference>
<dbReference type="GO" id="GO:0045454">
    <property type="term" value="P:cell redox homeostasis"/>
    <property type="evidence" value="ECO:0000314"/>
    <property type="project" value="MTBBASE"/>
</dbReference>
<dbReference type="GO" id="GO:0098754">
    <property type="term" value="P:detoxification"/>
    <property type="evidence" value="ECO:0000314"/>
    <property type="project" value="MTBBASE"/>
</dbReference>
<dbReference type="GO" id="GO:0051409">
    <property type="term" value="P:response to nitrosative stress"/>
    <property type="evidence" value="ECO:0000314"/>
    <property type="project" value="MTBBASE"/>
</dbReference>
<dbReference type="GO" id="GO:0006979">
    <property type="term" value="P:response to oxidative stress"/>
    <property type="evidence" value="ECO:0000314"/>
    <property type="project" value="MTBBASE"/>
</dbReference>
<dbReference type="CDD" id="cd03014">
    <property type="entry name" value="PRX_Atyp2cys"/>
    <property type="match status" value="1"/>
</dbReference>
<dbReference type="FunFam" id="3.40.30.10:FF:000056">
    <property type="entry name" value="Thiol peroxidase"/>
    <property type="match status" value="1"/>
</dbReference>
<dbReference type="Gene3D" id="3.40.30.10">
    <property type="entry name" value="Glutaredoxin"/>
    <property type="match status" value="1"/>
</dbReference>
<dbReference type="HAMAP" id="MF_00269">
    <property type="entry name" value="Tpx"/>
    <property type="match status" value="1"/>
</dbReference>
<dbReference type="InterPro" id="IPR013740">
    <property type="entry name" value="Redoxin"/>
</dbReference>
<dbReference type="InterPro" id="IPR036249">
    <property type="entry name" value="Thioredoxin-like_sf"/>
</dbReference>
<dbReference type="InterPro" id="IPR013766">
    <property type="entry name" value="Thioredoxin_domain"/>
</dbReference>
<dbReference type="InterPro" id="IPR002065">
    <property type="entry name" value="TPX"/>
</dbReference>
<dbReference type="InterPro" id="IPR018219">
    <property type="entry name" value="Tpx_CS"/>
</dbReference>
<dbReference type="InterPro" id="IPR050455">
    <property type="entry name" value="Tpx_Peroxidase_subfamily"/>
</dbReference>
<dbReference type="NCBIfam" id="NF001808">
    <property type="entry name" value="PRK00522.1"/>
    <property type="match status" value="1"/>
</dbReference>
<dbReference type="PANTHER" id="PTHR43110">
    <property type="entry name" value="THIOL PEROXIDASE"/>
    <property type="match status" value="1"/>
</dbReference>
<dbReference type="PANTHER" id="PTHR43110:SF1">
    <property type="entry name" value="THIOL PEROXIDASE"/>
    <property type="match status" value="1"/>
</dbReference>
<dbReference type="Pfam" id="PF08534">
    <property type="entry name" value="Redoxin"/>
    <property type="match status" value="1"/>
</dbReference>
<dbReference type="SUPFAM" id="SSF52833">
    <property type="entry name" value="Thioredoxin-like"/>
    <property type="match status" value="1"/>
</dbReference>
<dbReference type="PROSITE" id="PS51352">
    <property type="entry name" value="THIOREDOXIN_2"/>
    <property type="match status" value="1"/>
</dbReference>
<dbReference type="PROSITE" id="PS01265">
    <property type="entry name" value="TPX"/>
    <property type="match status" value="1"/>
</dbReference>
<name>TPX_MYCTU</name>
<reference key="1">
    <citation type="journal article" date="1998" name="Nature">
        <title>Deciphering the biology of Mycobacterium tuberculosis from the complete genome sequence.</title>
        <authorList>
            <person name="Cole S.T."/>
            <person name="Brosch R."/>
            <person name="Parkhill J."/>
            <person name="Garnier T."/>
            <person name="Churcher C.M."/>
            <person name="Harris D.E."/>
            <person name="Gordon S.V."/>
            <person name="Eiglmeier K."/>
            <person name="Gas S."/>
            <person name="Barry C.E. III"/>
            <person name="Tekaia F."/>
            <person name="Badcock K."/>
            <person name="Basham D."/>
            <person name="Brown D."/>
            <person name="Chillingworth T."/>
            <person name="Connor R."/>
            <person name="Davies R.M."/>
            <person name="Devlin K."/>
            <person name="Feltwell T."/>
            <person name="Gentles S."/>
            <person name="Hamlin N."/>
            <person name="Holroyd S."/>
            <person name="Hornsby T."/>
            <person name="Jagels K."/>
            <person name="Krogh A."/>
            <person name="McLean J."/>
            <person name="Moule S."/>
            <person name="Murphy L.D."/>
            <person name="Oliver S."/>
            <person name="Osborne J."/>
            <person name="Quail M.A."/>
            <person name="Rajandream M.A."/>
            <person name="Rogers J."/>
            <person name="Rutter S."/>
            <person name="Seeger K."/>
            <person name="Skelton S."/>
            <person name="Squares S."/>
            <person name="Squares R."/>
            <person name="Sulston J.E."/>
            <person name="Taylor K."/>
            <person name="Whitehead S."/>
            <person name="Barrell B.G."/>
        </authorList>
    </citation>
    <scope>NUCLEOTIDE SEQUENCE [LARGE SCALE GENOMIC DNA]</scope>
    <source>
        <strain>ATCC 25618 / H37Rv</strain>
    </source>
</reference>
<reference key="2">
    <citation type="journal article" date="2004" name="Arch. Biochem. Biophys.">
        <title>Multiple thioredoxin-mediated routes to detoxify hydroperoxides in Mycobacterium tuberculosis.</title>
        <authorList>
            <person name="Jaeger T."/>
            <person name="Budde H."/>
            <person name="Flohe L."/>
            <person name="Menge U."/>
            <person name="Singh M."/>
            <person name="Trujillo M."/>
            <person name="Radi R."/>
        </authorList>
    </citation>
    <scope>FUNCTION</scope>
    <scope>CATALYTIC ACTIVITY</scope>
    <scope>BIOPHYSICOCHEMICAL PROPERTIES</scope>
</reference>
<reference key="3">
    <citation type="journal article" date="2011" name="Mol. Cell. Proteomics">
        <title>Proteogenomic analysis of Mycobacterium tuberculosis by high resolution mass spectrometry.</title>
        <authorList>
            <person name="Kelkar D.S."/>
            <person name="Kumar D."/>
            <person name="Kumar P."/>
            <person name="Balakrishnan L."/>
            <person name="Muthusamy B."/>
            <person name="Yadav A.K."/>
            <person name="Shrivastava P."/>
            <person name="Marimuthu A."/>
            <person name="Anand S."/>
            <person name="Sundaram H."/>
            <person name="Kingsbury R."/>
            <person name="Harsha H.C."/>
            <person name="Nair B."/>
            <person name="Prasad T.S."/>
            <person name="Chauhan D.S."/>
            <person name="Katoch K."/>
            <person name="Katoch V.M."/>
            <person name="Kumar P."/>
            <person name="Chaerkady R."/>
            <person name="Ramachandran S."/>
            <person name="Dash D."/>
            <person name="Pandey A."/>
        </authorList>
    </citation>
    <scope>IDENTIFICATION BY MASS SPECTROMETRY [LARGE SCALE ANALYSIS]</scope>
    <source>
        <strain>ATCC 25618 / H37Rv</strain>
    </source>
</reference>
<reference key="4">
    <citation type="journal article" date="2006" name="Acta Crystallogr. D">
        <title>Structure of the inactive variant C60S of Mycobacterium tuberculosis thiol peroxidase.</title>
        <authorList>
            <person name="Stehr M."/>
            <person name="Hecht H.J."/>
            <person name="Jaeger T."/>
            <person name="Flohe L."/>
            <person name="Singh M."/>
        </authorList>
    </citation>
    <scope>X-RAY CRYSTALLOGRAPHY (2.10 ANGSTROMS) OF 3-165</scope>
</reference>
<reference key="5">
    <citation type="journal article" date="2006" name="J. Mol. Biol.">
        <title>Functional and structural characterization of a thiol peroxidase from Mycobacterium tuberculosis.</title>
        <authorList>
            <person name="Rho B.S."/>
            <person name="Hung L.W."/>
            <person name="Holton J.M."/>
            <person name="Vigil D."/>
            <person name="Kim S.I."/>
            <person name="Park M.S."/>
            <person name="Terwilliger T.C."/>
            <person name="Pedelacq J.D."/>
        </authorList>
    </citation>
    <scope>X-RAY CRYSTALLOGRAPHY (1.75 ANGSTROMS)</scope>
    <scope>SUBUNIT</scope>
    <scope>MUTAGENESIS OF CYS-60; CYS-80 AND CYS-93</scope>
</reference>
<protein>
    <recommendedName>
        <fullName evidence="2 5">Thiol peroxidase</fullName>
        <shortName evidence="2">Tpx</shortName>
        <ecNumber evidence="2 3">1.11.1.24</ecNumber>
    </recommendedName>
    <alternativeName>
        <fullName evidence="2">Peroxiredoxin tpx</fullName>
        <shortName evidence="2">Prx</shortName>
    </alternativeName>
    <alternativeName>
        <fullName evidence="2">Thioredoxin peroxidase</fullName>
    </alternativeName>
    <alternativeName>
        <fullName evidence="2">Thioredoxin-dependent peroxiredoxin</fullName>
    </alternativeName>
</protein>
<comment type="function">
    <text evidence="2 3">Thiol-specific peroxidase that catalyzes the reduction of hydrogen peroxide and organic hydroperoxides to water and alcohols, respectively. Plays a role in cell protection against oxidative stress by detoxifying peroxides.</text>
</comment>
<comment type="catalytic activity">
    <reaction evidence="2 3">
        <text>a hydroperoxide + [thioredoxin]-dithiol = an alcohol + [thioredoxin]-disulfide + H2O</text>
        <dbReference type="Rhea" id="RHEA:62620"/>
        <dbReference type="Rhea" id="RHEA-COMP:10698"/>
        <dbReference type="Rhea" id="RHEA-COMP:10700"/>
        <dbReference type="ChEBI" id="CHEBI:15377"/>
        <dbReference type="ChEBI" id="CHEBI:29950"/>
        <dbReference type="ChEBI" id="CHEBI:30879"/>
        <dbReference type="ChEBI" id="CHEBI:35924"/>
        <dbReference type="ChEBI" id="CHEBI:50058"/>
        <dbReference type="EC" id="1.11.1.24"/>
    </reaction>
</comment>
<comment type="biophysicochemical properties">
    <kinetics>
        <KM evidence="3">14.5 uM for tert-butyl hydroperoxide (using thioredoxin TrxB as electron donor)</KM>
        <KM evidence="3">184.5 uM for tert-butyl hydroperoxide (using thioredoxin TrxC as electron donor)</KM>
        <KM evidence="3">2 uM for TrxB (using tert-butyl hydroperoxide as substrate)</KM>
        <KM evidence="3">120.7 uM for TrxC (using tert-butyl hydroperoxide as substrate)</KM>
        <text evidence="3">kcat is 0.70 sec(-1) with tert-butyl hydroperoxide as substrate and TrxB as reductant and 11.1 sec(-1) with tert-butyl hydroperoxide as substrate and TrxC as reductant.</text>
    </kinetics>
</comment>
<comment type="subunit">
    <text evidence="2 4">Homodimer.</text>
</comment>
<comment type="miscellaneous">
    <text evidence="2 6">The active site is a conserved redox-active cysteine residue, the peroxidatic cysteine (C(P)), which makes the nucleophilic attack on the peroxide substrate. The peroxide oxidizes the C(P)-SH to cysteine sulfenic acid (C(P)-SOH), which then reacts with another cysteine residue, the resolving cysteine (C(R)), to form a disulfide bridge. The disulfide is subsequently reduced by an appropriate electron donor to complete the catalytic cycle. In this atypical 2-Cys peroxiredoxin, C(R) is present in the same subunit to form an intramolecular disulfide. The disulfide is subsequently reduced by thioredoxin (TrxB and TrxC).</text>
</comment>
<comment type="similarity">
    <text evidence="2">Belongs to the peroxiredoxin family. Tpx subfamily.</text>
</comment>
<evidence type="ECO:0000250" key="1">
    <source>
        <dbReference type="UniProtKB" id="P0A862"/>
    </source>
</evidence>
<evidence type="ECO:0000255" key="2">
    <source>
        <dbReference type="HAMAP-Rule" id="MF_00269"/>
    </source>
</evidence>
<evidence type="ECO:0000269" key="3">
    <source>
    </source>
</evidence>
<evidence type="ECO:0000269" key="4">
    <source>
    </source>
</evidence>
<evidence type="ECO:0000303" key="5">
    <source>
    </source>
</evidence>
<evidence type="ECO:0000305" key="6">
    <source>
    </source>
</evidence>
<evidence type="ECO:0000305" key="7">
    <source>
    </source>
</evidence>
<evidence type="ECO:0007829" key="8">
    <source>
        <dbReference type="PDB" id="1XVQ"/>
    </source>
</evidence>
<evidence type="ECO:0007829" key="9">
    <source>
        <dbReference type="PDB" id="1Y25"/>
    </source>
</evidence>
<sequence>MAQITLRGNAINTVGELPAVGSPAPAFTLTGGDLGVISSDQFRGKSVLLNIFPSVDTPVCATSVRTFDERAAASGATVLCVSKDLPFAQKRFCGAEGTENVMPASAFRDSFGEDYGVTIADGPMAGLLARAIVVIGADGNVAYTELVPEIAQEPNYEAALAALGA</sequence>
<gene>
    <name evidence="2" type="primary">tpx</name>
    <name type="ordered locus">Rv1932</name>
    <name type="ORF">MTCY09F9.32c</name>
</gene>
<keyword id="KW-0002">3D-structure</keyword>
<keyword id="KW-0049">Antioxidant</keyword>
<keyword id="KW-1015">Disulfide bond</keyword>
<keyword id="KW-0560">Oxidoreductase</keyword>
<keyword id="KW-0575">Peroxidase</keyword>
<keyword id="KW-0676">Redox-active center</keyword>
<keyword id="KW-1185">Reference proteome</keyword>
<feature type="chain" id="PRO_0000187888" description="Thiol peroxidase">
    <location>
        <begin position="1"/>
        <end position="165"/>
    </location>
</feature>
<feature type="domain" description="Thioredoxin" evidence="2">
    <location>
        <begin position="18"/>
        <end position="165"/>
    </location>
</feature>
<feature type="active site" description="Cysteine sulfenic acid (-SOH) intermediate" evidence="1 2 7">
    <location>
        <position position="60"/>
    </location>
</feature>
<feature type="disulfide bond" description="Redox-active" evidence="1 2 7">
    <location>
        <begin position="60"/>
        <end position="93"/>
    </location>
</feature>
<feature type="mutagenesis site" description="Abolishes catalytic activity." evidence="4">
    <original>C</original>
    <variation>S</variation>
    <location>
        <position position="60"/>
    </location>
</feature>
<feature type="mutagenesis site" description="Increases catalytic activity." evidence="4">
    <original>C</original>
    <variation>S</variation>
    <location>
        <position position="80"/>
    </location>
</feature>
<feature type="mutagenesis site" description="Abolishes catalytic activity." evidence="4">
    <original>C</original>
    <variation>S</variation>
    <location>
        <position position="93"/>
    </location>
</feature>
<feature type="strand" evidence="9">
    <location>
        <begin position="3"/>
        <end position="6"/>
    </location>
</feature>
<feature type="strand" evidence="8">
    <location>
        <begin position="13"/>
        <end position="15"/>
    </location>
</feature>
<feature type="strand" evidence="8">
    <location>
        <begin position="28"/>
        <end position="30"/>
    </location>
</feature>
<feature type="strand" evidence="8">
    <location>
        <begin position="36"/>
        <end position="38"/>
    </location>
</feature>
<feature type="helix" evidence="8">
    <location>
        <begin position="39"/>
        <end position="42"/>
    </location>
</feature>
<feature type="strand" evidence="8">
    <location>
        <begin position="47"/>
        <end position="51"/>
    </location>
</feature>
<feature type="helix" evidence="8">
    <location>
        <begin position="62"/>
        <end position="73"/>
    </location>
</feature>
<feature type="strand" evidence="8">
    <location>
        <begin position="77"/>
        <end position="84"/>
    </location>
</feature>
<feature type="helix" evidence="8">
    <location>
        <begin position="86"/>
        <end position="89"/>
    </location>
</feature>
<feature type="strand" evidence="8">
    <location>
        <begin position="101"/>
        <end position="105"/>
    </location>
</feature>
<feature type="helix" evidence="8">
    <location>
        <begin position="111"/>
        <end position="114"/>
    </location>
</feature>
<feature type="turn" evidence="8">
    <location>
        <begin position="123"/>
        <end position="126"/>
    </location>
</feature>
<feature type="strand" evidence="8">
    <location>
        <begin position="130"/>
        <end position="135"/>
    </location>
</feature>
<feature type="strand" evidence="8">
    <location>
        <begin position="139"/>
        <end position="146"/>
    </location>
</feature>
<feature type="helix" evidence="8">
    <location>
        <begin position="156"/>
        <end position="165"/>
    </location>
</feature>
<organism>
    <name type="scientific">Mycobacterium tuberculosis (strain ATCC 25618 / H37Rv)</name>
    <dbReference type="NCBI Taxonomy" id="83332"/>
    <lineage>
        <taxon>Bacteria</taxon>
        <taxon>Bacillati</taxon>
        <taxon>Actinomycetota</taxon>
        <taxon>Actinomycetes</taxon>
        <taxon>Mycobacteriales</taxon>
        <taxon>Mycobacteriaceae</taxon>
        <taxon>Mycobacterium</taxon>
        <taxon>Mycobacterium tuberculosis complex</taxon>
    </lineage>
</organism>
<accession>P9WG35</accession>
<accession>L0TB06</accession>
<accession>P66952</accession>
<accession>P95282</accession>
<proteinExistence type="evidence at protein level"/>